<proteinExistence type="evidence at protein level"/>
<accession>C0HKT6</accession>
<accession>C0HKT7</accession>
<accession>C0HKT8</accession>
<accession>C0HKT9</accession>
<protein>
    <recommendedName>
        <fullName evidence="1">FMRFamide-related peptides</fullName>
    </recommendedName>
    <component>
        <recommendedName>
            <fullName evidence="6">SAIDRSMIRF-amide</fullName>
        </recommendedName>
        <alternativeName>
            <fullName evidence="7">RFamide 1</fullName>
            <shortName evidence="5">RFa-1</shortName>
        </alternativeName>
    </component>
    <component>
        <recommendedName>
            <fullName evidence="7">RFamide precursor-related peptide 2</fullName>
            <shortName evidence="5">RFs-PP-2</shortName>
        </recommendedName>
    </component>
    <component>
        <recommendedName>
            <fullName evidence="6">SASFVRF-amide</fullName>
        </recommendedName>
        <alternativeName>
            <fullName evidence="7">RFamide 3</fullName>
            <shortName evidence="5">RFa-3</shortName>
        </alternativeName>
    </component>
    <component>
        <recommendedName>
            <fullName evidence="6">ARDHFIRL-amide</fullName>
        </recommendedName>
        <alternativeName>
            <fullName evidence="7">RFamide 5</fullName>
            <shortName evidence="5">RFa-5</shortName>
        </alternativeName>
    </component>
</protein>
<organism>
    <name type="scientific">Agrotis ipsilon</name>
    <name type="common">Black cutworm moth</name>
    <dbReference type="NCBI Taxonomy" id="56364"/>
    <lineage>
        <taxon>Eukaryota</taxon>
        <taxon>Metazoa</taxon>
        <taxon>Ecdysozoa</taxon>
        <taxon>Arthropoda</taxon>
        <taxon>Hexapoda</taxon>
        <taxon>Insecta</taxon>
        <taxon>Pterygota</taxon>
        <taxon>Neoptera</taxon>
        <taxon>Endopterygota</taxon>
        <taxon>Lepidoptera</taxon>
        <taxon>Glossata</taxon>
        <taxon>Ditrysia</taxon>
        <taxon>Noctuoidea</taxon>
        <taxon>Noctuidae</taxon>
        <taxon>Noctuinae</taxon>
        <taxon>Noctuini</taxon>
        <taxon>Agrotis</taxon>
    </lineage>
</organism>
<name>FMRFA_AGRIP</name>
<keyword id="KW-0027">Amidation</keyword>
<keyword id="KW-0165">Cleavage on pair of basic residues</keyword>
<keyword id="KW-0903">Direct protein sequencing</keyword>
<keyword id="KW-0527">Neuropeptide</keyword>
<keyword id="KW-0964">Secreted</keyword>
<keyword id="KW-0732">Signal</keyword>
<sequence length="190" mass="21717">MSCSRTVALLAALWLVVGATSSPVRRSPDLEARRRSAIDRSMIRFGRSYPPEPSAADIREAFERPTRRGNSFLRFGRSQPLTLSTDDLVSLLRAYEEDYDTPMTKKSASFVRFGRDPNFIRLGRSADDDKSAFEQNSELVVSGYPQRKSRARDHFIRLGRDSEEVNENEFEETEESRRKRSADSCHDCQS</sequence>
<evidence type="ECO:0000250" key="1">
    <source>
        <dbReference type="UniProtKB" id="Q1MX22"/>
    </source>
</evidence>
<evidence type="ECO:0000255" key="2"/>
<evidence type="ECO:0000256" key="3">
    <source>
        <dbReference type="SAM" id="MobiDB-lite"/>
    </source>
</evidence>
<evidence type="ECO:0000269" key="4">
    <source>
    </source>
</evidence>
<evidence type="ECO:0000303" key="5">
    <source>
    </source>
</evidence>
<evidence type="ECO:0000305" key="6"/>
<evidence type="ECO:0000305" key="7">
    <source>
    </source>
</evidence>
<comment type="function">
    <text evidence="6">In insects, FMRFamide and related peptides have modulatory actions at skeletal neuromuscular junctions, and peptides that are immunologically related to FMRFamide are released into the circulation from neurohemal organs.</text>
</comment>
<comment type="subcellular location">
    <subcellularLocation>
        <location evidence="6">Secreted</location>
    </subcellularLocation>
</comment>
<comment type="tissue specificity">
    <text evidence="4">RFamide 1: Expressed in corpora cardiaca (CC), corpora allata (CA), antennal lobe (AL) and gnathal ganglion (GNG) (at protein level). Expression in AL detected in most animals, in CC, CA and in GNG in some animals (at protein level). RFamide precursor-related peptide 2: Expressed in corpora cardiaca (CC), corpora allata (CA), antennal lobe (AL) and gnathal ganglion (GNG) (at protein level). Expression in AL detected in some animals, expression in CC, CA and GNG in few animals (at protein level). RFamide 3: Expressed in corpora cardiaca (CC), corpora allata (CA), antennal lobe (AL) and gnathal ganglion (GNG) (at protein level). Expression in AL detected in all animals, in CC, CA and GNG in most animals (at protein level). RFamide 5: Expressed in corpora cardiaca (CC), corpora allata (CA), antennal lobe (AL) and gnathal ganglion (GNG) (at protein level). Expression in AL detected in all animals, in CC, CA and in GNG in some animals (at protein level).</text>
</comment>
<comment type="mass spectrometry" mass="1194.62" error="0.01" method="MALDI" evidence="4">
    <molecule>SAIDRSMIRF-amide</molecule>
    <text>RFamide 1.</text>
</comment>
<comment type="mass spectrometry" mass="2132.99" error="0.01" method="MALDI" evidence="4">
    <molecule>RFamide precursor-related peptide 2</molecule>
    <text>RFamide precursor-related peptide 2.</text>
</comment>
<comment type="mass spectrometry" mass="812.42" error="0.01" method="MALDI" evidence="4">
    <molecule>SASFVRF-amide</molecule>
    <text>RFamide 3.</text>
</comment>
<comment type="mass spectrometry" mass="1026.63" error="0.01" method="MALDI" evidence="4">
    <molecule>ARDHFIRL-amide</molecule>
    <text>RFamide 5.</text>
</comment>
<comment type="similarity">
    <text evidence="6">Belongs to the FARP (FMRFamide related peptide) family.</text>
</comment>
<comment type="caution">
    <text evidence="6">Further mature peptides might exist.</text>
</comment>
<feature type="signal peptide" evidence="2">
    <location>
        <begin position="1"/>
        <end position="21"/>
    </location>
</feature>
<feature type="propeptide" id="PRO_0000444229" evidence="6">
    <location>
        <begin position="22"/>
        <end position="33"/>
    </location>
</feature>
<feature type="peptide" id="PRO_0000444230" description="SAIDRSMIRF-amide" evidence="4">
    <location>
        <begin position="36"/>
        <end position="45"/>
    </location>
</feature>
<feature type="peptide" id="PRO_0000444231" description="RFamide precursor-related peptide 2" evidence="4">
    <location>
        <begin position="48"/>
        <end position="66"/>
    </location>
</feature>
<feature type="propeptide" id="PRO_0000444232" evidence="6">
    <location>
        <begin position="69"/>
        <end position="104"/>
    </location>
</feature>
<feature type="peptide" id="PRO_0000444233" description="SASFVRF-amide" evidence="4">
    <location>
        <begin position="107"/>
        <end position="113"/>
    </location>
</feature>
<feature type="propeptide" id="PRO_0000444234" evidence="6">
    <location>
        <begin position="116"/>
        <end position="150"/>
    </location>
</feature>
<feature type="peptide" id="PRO_0000444235" description="ARDHFIRL-amide" evidence="4">
    <location>
        <begin position="151"/>
        <end position="158"/>
    </location>
</feature>
<feature type="propeptide" id="PRO_0000444236" evidence="6">
    <location>
        <begin position="160"/>
        <end position="190"/>
    </location>
</feature>
<feature type="region of interest" description="Disordered" evidence="3">
    <location>
        <begin position="161"/>
        <end position="190"/>
    </location>
</feature>
<feature type="compositionally biased region" description="Acidic residues" evidence="3">
    <location>
        <begin position="164"/>
        <end position="174"/>
    </location>
</feature>
<feature type="compositionally biased region" description="Basic and acidic residues" evidence="3">
    <location>
        <begin position="175"/>
        <end position="190"/>
    </location>
</feature>
<feature type="modified residue" description="Phenylalanine amide" evidence="4">
    <location>
        <position position="45"/>
    </location>
</feature>
<feature type="modified residue" description="Phenylalanine amide" evidence="4">
    <location>
        <position position="113"/>
    </location>
</feature>
<feature type="modified residue" description="Leucine amide" evidence="4">
    <location>
        <position position="158"/>
    </location>
</feature>
<reference evidence="6" key="1">
    <citation type="journal article" date="2018" name="J. Proteome Res.">
        <title>Mating-induced differential peptidomics of neuropeptides and protein hormones in Agrotis ipsilon moths.</title>
        <authorList>
            <person name="Diesner M."/>
            <person name="Gallot A."/>
            <person name="Binz H."/>
            <person name="Gaertner C."/>
            <person name="Vitecek S."/>
            <person name="Kahnt J."/>
            <person name="Schachtner J."/>
            <person name="Jacquin-Joly E."/>
            <person name="Gadenne C."/>
        </authorList>
    </citation>
    <scope>NUCLEOTIDE SEQUENCE [MRNA]</scope>
    <scope>PROTEIN SEQUENCE OF 36-45; 48-66; 107-113 AND 151-158</scope>
    <scope>TISSUE SPECIFICITY</scope>
    <scope>MASS SPECTROMETRY</scope>
    <scope>IDENTIFICATION BY MASS SPECTROMETRY</scope>
    <scope>AMIDATION AT PHE-45; PHE-113 AND LEU-158</scope>
</reference>
<dbReference type="GO" id="GO:0005576">
    <property type="term" value="C:extracellular region"/>
    <property type="evidence" value="ECO:0007669"/>
    <property type="project" value="UniProtKB-SubCell"/>
</dbReference>
<dbReference type="GO" id="GO:0007218">
    <property type="term" value="P:neuropeptide signaling pathway"/>
    <property type="evidence" value="ECO:0007669"/>
    <property type="project" value="UniProtKB-KW"/>
</dbReference>